<accession>Q4JAV2</accession>
<dbReference type="EMBL" id="CP000077">
    <property type="protein sequence ID" value="AAY80077.1"/>
    <property type="molecule type" value="Genomic_DNA"/>
</dbReference>
<dbReference type="RefSeq" id="WP_011277579.1">
    <property type="nucleotide sequence ID" value="NC_007181.1"/>
</dbReference>
<dbReference type="PDB" id="8HKU">
    <property type="method" value="EM"/>
    <property type="resolution" value="2.72 A"/>
    <property type="chains" value="L24E=5-58"/>
</dbReference>
<dbReference type="PDB" id="8HKV">
    <property type="method" value="EM"/>
    <property type="resolution" value="4.94 A"/>
    <property type="chains" value="L24E=5-58"/>
</dbReference>
<dbReference type="PDB" id="8HKY">
    <property type="method" value="EM"/>
    <property type="resolution" value="4.45 A"/>
    <property type="chains" value="L24E=5-58"/>
</dbReference>
<dbReference type="PDB" id="8HKZ">
    <property type="method" value="EM"/>
    <property type="resolution" value="4.78 A"/>
    <property type="chains" value="L24E=5-58"/>
</dbReference>
<dbReference type="PDB" id="8HL1">
    <property type="method" value="EM"/>
    <property type="resolution" value="3.93 A"/>
    <property type="chains" value="L24E=5-58"/>
</dbReference>
<dbReference type="PDB" id="8HL2">
    <property type="method" value="EM"/>
    <property type="resolution" value="4.10 A"/>
    <property type="chains" value="L24E=5-58"/>
</dbReference>
<dbReference type="PDB" id="8HL3">
    <property type="method" value="EM"/>
    <property type="resolution" value="4.80 A"/>
    <property type="chains" value="L24E=5-58"/>
</dbReference>
<dbReference type="PDB" id="8HL4">
    <property type="method" value="EM"/>
    <property type="resolution" value="4.62 A"/>
    <property type="chains" value="L24E=5-58"/>
</dbReference>
<dbReference type="PDB" id="8HL5">
    <property type="method" value="EM"/>
    <property type="resolution" value="5.72 A"/>
    <property type="chains" value="L24E=5-58"/>
</dbReference>
<dbReference type="PDBsum" id="8HKU"/>
<dbReference type="PDBsum" id="8HKV"/>
<dbReference type="PDBsum" id="8HKY"/>
<dbReference type="PDBsum" id="8HKZ"/>
<dbReference type="PDBsum" id="8HL1"/>
<dbReference type="PDBsum" id="8HL2"/>
<dbReference type="PDBsum" id="8HL3"/>
<dbReference type="PDBsum" id="8HL4"/>
<dbReference type="PDBsum" id="8HL5"/>
<dbReference type="EMDB" id="EMD-34860"/>
<dbReference type="EMDB" id="EMD-34861"/>
<dbReference type="EMDB" id="EMD-34863"/>
<dbReference type="EMDB" id="EMD-34864"/>
<dbReference type="EMDB" id="EMD-34866"/>
<dbReference type="EMDB" id="EMD-34867"/>
<dbReference type="EMDB" id="EMD-34868"/>
<dbReference type="EMDB" id="EMD-34869"/>
<dbReference type="EMDB" id="EMD-34870"/>
<dbReference type="SMR" id="Q4JAV2"/>
<dbReference type="STRING" id="330779.Saci_0697"/>
<dbReference type="GeneID" id="14551212"/>
<dbReference type="KEGG" id="sai:Saci_0697"/>
<dbReference type="PATRIC" id="fig|330779.12.peg.665"/>
<dbReference type="eggNOG" id="arCOG01950">
    <property type="taxonomic scope" value="Archaea"/>
</dbReference>
<dbReference type="HOGENOM" id="CLU_190191_0_0_2"/>
<dbReference type="Proteomes" id="UP000001018">
    <property type="component" value="Chromosome"/>
</dbReference>
<dbReference type="GO" id="GO:1990904">
    <property type="term" value="C:ribonucleoprotein complex"/>
    <property type="evidence" value="ECO:0007669"/>
    <property type="project" value="UniProtKB-KW"/>
</dbReference>
<dbReference type="GO" id="GO:0005840">
    <property type="term" value="C:ribosome"/>
    <property type="evidence" value="ECO:0007669"/>
    <property type="project" value="UniProtKB-KW"/>
</dbReference>
<dbReference type="GO" id="GO:0019843">
    <property type="term" value="F:rRNA binding"/>
    <property type="evidence" value="ECO:0007669"/>
    <property type="project" value="UniProtKB-UniRule"/>
</dbReference>
<dbReference type="GO" id="GO:0003735">
    <property type="term" value="F:structural constituent of ribosome"/>
    <property type="evidence" value="ECO:0007669"/>
    <property type="project" value="InterPro"/>
</dbReference>
<dbReference type="GO" id="GO:0008270">
    <property type="term" value="F:zinc ion binding"/>
    <property type="evidence" value="ECO:0007669"/>
    <property type="project" value="UniProtKB-UniRule"/>
</dbReference>
<dbReference type="GO" id="GO:0006412">
    <property type="term" value="P:translation"/>
    <property type="evidence" value="ECO:0007669"/>
    <property type="project" value="UniProtKB-UniRule"/>
</dbReference>
<dbReference type="CDD" id="cd00472">
    <property type="entry name" value="Ribosomal_L24e_L24"/>
    <property type="match status" value="1"/>
</dbReference>
<dbReference type="FunFam" id="2.30.170.20:FF:000001">
    <property type="entry name" value="probable ribosome biogenesis protein RLP24"/>
    <property type="match status" value="1"/>
</dbReference>
<dbReference type="Gene3D" id="2.30.170.20">
    <property type="entry name" value="Ribosomal protein L24e"/>
    <property type="match status" value="1"/>
</dbReference>
<dbReference type="HAMAP" id="MF_00773">
    <property type="entry name" value="Ribosomal_eL24"/>
    <property type="match status" value="1"/>
</dbReference>
<dbReference type="InterPro" id="IPR038630">
    <property type="entry name" value="L24e/L24_sf"/>
</dbReference>
<dbReference type="InterPro" id="IPR056366">
    <property type="entry name" value="Ribosomal_eL24"/>
</dbReference>
<dbReference type="InterPro" id="IPR055345">
    <property type="entry name" value="Ribosomal_eL24-rel_arc"/>
</dbReference>
<dbReference type="InterPro" id="IPR000988">
    <property type="entry name" value="Ribosomal_eL24-rel_N"/>
</dbReference>
<dbReference type="InterPro" id="IPR023442">
    <property type="entry name" value="Ribosomal_eL24_CS"/>
</dbReference>
<dbReference type="InterPro" id="IPR011017">
    <property type="entry name" value="TRASH_dom"/>
</dbReference>
<dbReference type="NCBIfam" id="NF034186">
    <property type="entry name" value="PRK14891.1-1"/>
    <property type="match status" value="1"/>
</dbReference>
<dbReference type="PANTHER" id="PTHR10792">
    <property type="entry name" value="60S RIBOSOMAL PROTEIN L24"/>
    <property type="match status" value="1"/>
</dbReference>
<dbReference type="PANTHER" id="PTHR10792:SF1">
    <property type="entry name" value="RIBOSOMAL PROTEIN L24"/>
    <property type="match status" value="1"/>
</dbReference>
<dbReference type="Pfam" id="PF01246">
    <property type="entry name" value="Ribosomal_L24e"/>
    <property type="match status" value="1"/>
</dbReference>
<dbReference type="SMART" id="SM00746">
    <property type="entry name" value="TRASH"/>
    <property type="match status" value="1"/>
</dbReference>
<dbReference type="SUPFAM" id="SSF57716">
    <property type="entry name" value="Glucocorticoid receptor-like (DNA-binding domain)"/>
    <property type="match status" value="1"/>
</dbReference>
<dbReference type="PROSITE" id="PS01073">
    <property type="entry name" value="RIBOSOMAL_L24E"/>
    <property type="match status" value="1"/>
</dbReference>
<feature type="chain" id="PRO_0000136927" description="Large ribosomal subunit protein eL24">
    <location>
        <begin position="1"/>
        <end position="62"/>
    </location>
</feature>
<feature type="zinc finger region" description="C4-type" evidence="1">
    <location>
        <begin position="7"/>
        <end position="37"/>
    </location>
</feature>
<feature type="binding site" evidence="1">
    <location>
        <position position="7"/>
    </location>
    <ligand>
        <name>Zn(2+)</name>
        <dbReference type="ChEBI" id="CHEBI:29105"/>
    </ligand>
</feature>
<feature type="binding site" evidence="1">
    <location>
        <position position="10"/>
    </location>
    <ligand>
        <name>Zn(2+)</name>
        <dbReference type="ChEBI" id="CHEBI:29105"/>
    </ligand>
</feature>
<feature type="binding site" evidence="1">
    <location>
        <position position="33"/>
    </location>
    <ligand>
        <name>Zn(2+)</name>
        <dbReference type="ChEBI" id="CHEBI:29105"/>
    </ligand>
</feature>
<feature type="binding site" evidence="1">
    <location>
        <position position="37"/>
    </location>
    <ligand>
        <name>Zn(2+)</name>
        <dbReference type="ChEBI" id="CHEBI:29105"/>
    </ligand>
</feature>
<reference key="1">
    <citation type="journal article" date="2005" name="J. Bacteriol.">
        <title>The genome of Sulfolobus acidocaldarius, a model organism of the Crenarchaeota.</title>
        <authorList>
            <person name="Chen L."/>
            <person name="Bruegger K."/>
            <person name="Skovgaard M."/>
            <person name="Redder P."/>
            <person name="She Q."/>
            <person name="Torarinsson E."/>
            <person name="Greve B."/>
            <person name="Awayez M."/>
            <person name="Zibat A."/>
            <person name="Klenk H.-P."/>
            <person name="Garrett R.A."/>
        </authorList>
    </citation>
    <scope>NUCLEOTIDE SEQUENCE [LARGE SCALE GENOMIC DNA]</scope>
    <source>
        <strain>ATCC 33909 / DSM 639 / JCM 8929 / NBRC 15157 / NCIMB 11770</strain>
    </source>
</reference>
<proteinExistence type="evidence at protein level"/>
<name>RL24E_SULAC</name>
<sequence length="62" mass="7097">MVSTRQCSFCGKDILPGTGLMYVRNDGSLLWFCSSKCRKSMLKLHRDPKKLKWTKSYLGAKP</sequence>
<organism>
    <name type="scientific">Sulfolobus acidocaldarius (strain ATCC 33909 / DSM 639 / JCM 8929 / NBRC 15157 / NCIMB 11770)</name>
    <dbReference type="NCBI Taxonomy" id="330779"/>
    <lineage>
        <taxon>Archaea</taxon>
        <taxon>Thermoproteota</taxon>
        <taxon>Thermoprotei</taxon>
        <taxon>Sulfolobales</taxon>
        <taxon>Sulfolobaceae</taxon>
        <taxon>Sulfolobus</taxon>
    </lineage>
</organism>
<keyword id="KW-0002">3D-structure</keyword>
<keyword id="KW-0479">Metal-binding</keyword>
<keyword id="KW-1185">Reference proteome</keyword>
<keyword id="KW-0687">Ribonucleoprotein</keyword>
<keyword id="KW-0689">Ribosomal protein</keyword>
<keyword id="KW-0694">RNA-binding</keyword>
<keyword id="KW-0699">rRNA-binding</keyword>
<keyword id="KW-0862">Zinc</keyword>
<keyword id="KW-0863">Zinc-finger</keyword>
<gene>
    <name evidence="1" type="primary">rpl24e</name>
    <name type="ordered locus">Saci_0697</name>
</gene>
<protein>
    <recommendedName>
        <fullName evidence="1">Large ribosomal subunit protein eL24</fullName>
    </recommendedName>
    <alternativeName>
        <fullName evidence="2">50S ribosomal protein L24e</fullName>
    </alternativeName>
</protein>
<comment type="function">
    <text evidence="1">Binds to the 23S rRNA.</text>
</comment>
<comment type="cofactor">
    <cofactor evidence="1">
        <name>Zn(2+)</name>
        <dbReference type="ChEBI" id="CHEBI:29105"/>
    </cofactor>
    <text evidence="1">Binds 1 zinc ion per subunit.</text>
</comment>
<comment type="subunit">
    <text evidence="1">Part of the 50S ribosomal subunit. Forms a cluster with proteins L3 and L14.</text>
</comment>
<comment type="similarity">
    <text evidence="1">Belongs to the eukaryotic ribosomal protein eL24 family.</text>
</comment>
<evidence type="ECO:0000255" key="1">
    <source>
        <dbReference type="HAMAP-Rule" id="MF_00773"/>
    </source>
</evidence>
<evidence type="ECO:0000305" key="2"/>